<comment type="function">
    <text evidence="1">Catalyzes the NADPH-dependent reduction of ketopantoate into pantoic acid.</text>
</comment>
<comment type="catalytic activity">
    <reaction evidence="1">
        <text>(R)-pantoate + NADP(+) = 2-dehydropantoate + NADPH + H(+)</text>
        <dbReference type="Rhea" id="RHEA:16233"/>
        <dbReference type="ChEBI" id="CHEBI:11561"/>
        <dbReference type="ChEBI" id="CHEBI:15378"/>
        <dbReference type="ChEBI" id="CHEBI:15980"/>
        <dbReference type="ChEBI" id="CHEBI:57783"/>
        <dbReference type="ChEBI" id="CHEBI:58349"/>
        <dbReference type="EC" id="1.1.1.169"/>
    </reaction>
</comment>
<comment type="pathway">
    <text evidence="1">Cofactor biosynthesis; (R)-pantothenate biosynthesis; (R)-pantoate from 3-methyl-2-oxobutanoate: step 2/2.</text>
</comment>
<comment type="subcellular location">
    <subcellularLocation>
        <location evidence="1">Cytoplasm</location>
    </subcellularLocation>
</comment>
<comment type="miscellaneous">
    <text evidence="2">Was identified as a high-confidence drug target.</text>
</comment>
<comment type="similarity">
    <text evidence="4">Belongs to the ketopantoate reductase family.</text>
</comment>
<comment type="sequence caution" evidence="4">
    <conflict type="erroneous initiation">
        <sequence resource="EMBL-CDS" id="CCP45369"/>
    </conflict>
    <text>Truncated N-terminus.</text>
</comment>
<accession>P9WIL1</accession>
<accession>L0TBN6</accession>
<accession>Q50648</accession>
<evidence type="ECO:0000250" key="1">
    <source>
        <dbReference type="UniProtKB" id="P0A9J4"/>
    </source>
</evidence>
<evidence type="ECO:0000269" key="2">
    <source>
    </source>
</evidence>
<evidence type="ECO:0000269" key="3">
    <source ref="4"/>
</evidence>
<evidence type="ECO:0000305" key="4"/>
<evidence type="ECO:0007744" key="5">
    <source>
        <dbReference type="PDB" id="4OL9"/>
    </source>
</evidence>
<evidence type="ECO:0007829" key="6">
    <source>
        <dbReference type="PDB" id="4OL9"/>
    </source>
</evidence>
<gene>
    <name type="ordered locus">Rv2573</name>
    <name type="ORF">MTCY227.28c</name>
</gene>
<reference key="1">
    <citation type="journal article" date="1998" name="Nature">
        <title>Deciphering the biology of Mycobacterium tuberculosis from the complete genome sequence.</title>
        <authorList>
            <person name="Cole S.T."/>
            <person name="Brosch R."/>
            <person name="Parkhill J."/>
            <person name="Garnier T."/>
            <person name="Churcher C.M."/>
            <person name="Harris D.E."/>
            <person name="Gordon S.V."/>
            <person name="Eiglmeier K."/>
            <person name="Gas S."/>
            <person name="Barry C.E. III"/>
            <person name="Tekaia F."/>
            <person name="Badcock K."/>
            <person name="Basham D."/>
            <person name="Brown D."/>
            <person name="Chillingworth T."/>
            <person name="Connor R."/>
            <person name="Davies R.M."/>
            <person name="Devlin K."/>
            <person name="Feltwell T."/>
            <person name="Gentles S."/>
            <person name="Hamlin N."/>
            <person name="Holroyd S."/>
            <person name="Hornsby T."/>
            <person name="Jagels K."/>
            <person name="Krogh A."/>
            <person name="McLean J."/>
            <person name="Moule S."/>
            <person name="Murphy L.D."/>
            <person name="Oliver S."/>
            <person name="Osborne J."/>
            <person name="Quail M.A."/>
            <person name="Rajandream M.A."/>
            <person name="Rogers J."/>
            <person name="Rutter S."/>
            <person name="Seeger K."/>
            <person name="Skelton S."/>
            <person name="Squares S."/>
            <person name="Squares R."/>
            <person name="Sulston J.E."/>
            <person name="Taylor K."/>
            <person name="Whitehead S."/>
            <person name="Barrell B.G."/>
        </authorList>
    </citation>
    <scope>NUCLEOTIDE SEQUENCE [LARGE SCALE GENOMIC DNA]</scope>
    <source>
        <strain>ATCC 25618 / H37Rv</strain>
    </source>
</reference>
<reference key="2">
    <citation type="journal article" date="2008" name="BMC Syst. Biol.">
        <title>targetTB: a target identification pipeline for Mycobacterium tuberculosis through an interactome, reactome and genome-scale structural analysis.</title>
        <authorList>
            <person name="Raman K."/>
            <person name="Yeturu K."/>
            <person name="Chandra N."/>
        </authorList>
    </citation>
    <scope>IDENTIFICATION AS A DRUG TARGET [LARGE SCALE ANALYSIS]</scope>
</reference>
<reference key="3">
    <citation type="journal article" date="2011" name="Mol. Cell. Proteomics">
        <title>Proteogenomic analysis of Mycobacterium tuberculosis by high resolution mass spectrometry.</title>
        <authorList>
            <person name="Kelkar D.S."/>
            <person name="Kumar D."/>
            <person name="Kumar P."/>
            <person name="Balakrishnan L."/>
            <person name="Muthusamy B."/>
            <person name="Yadav A.K."/>
            <person name="Shrivastava P."/>
            <person name="Marimuthu A."/>
            <person name="Anand S."/>
            <person name="Sundaram H."/>
            <person name="Kingsbury R."/>
            <person name="Harsha H.C."/>
            <person name="Nair B."/>
            <person name="Prasad T.S."/>
            <person name="Chauhan D.S."/>
            <person name="Katoch K."/>
            <person name="Katoch V.M."/>
            <person name="Kumar P."/>
            <person name="Chaerkady R."/>
            <person name="Ramachandran S."/>
            <person name="Dash D."/>
            <person name="Pandey A."/>
        </authorList>
    </citation>
    <scope>IDENTIFICATION BY MASS SPECTROMETRY [LARGE SCALE ANALYSIS]</scope>
    <source>
        <strain>ATCC 25618 / H37Rv</strain>
    </source>
</reference>
<reference evidence="5" key="4">
    <citation type="submission" date="2014-01" db="PDB data bank">
        <title>Crystal structure of putative 2-dehydropantoate 2-reductase PanE from Mycobacterium tuberculosis complexed with NADP and oxamate.</title>
        <authorList>
            <consortium name="Seattle Structural Genomics Center for Infectious Disease (SSGCID)"/>
            <person name="Dranow D.M."/>
            <person name="Wernimont A.K."/>
            <person name="Abendroth A."/>
            <person name="Pierce P.G."/>
            <person name="Bullen J."/>
            <person name="Edwards T.E."/>
            <person name="Lorimer D."/>
        </authorList>
    </citation>
    <scope>X-RAY CRYSTALLOGRAPHY (1.85 ANGSTROMS) OF 2-295 IN COMPLEX WITH NADP</scope>
</reference>
<keyword id="KW-0002">3D-structure</keyword>
<keyword id="KW-0963">Cytoplasm</keyword>
<keyword id="KW-0521">NADP</keyword>
<keyword id="KW-0560">Oxidoreductase</keyword>
<keyword id="KW-0566">Pantothenate biosynthesis</keyword>
<keyword id="KW-1185">Reference proteome</keyword>
<name>PANE_MYCTU</name>
<protein>
    <recommendedName>
        <fullName evidence="1">2-dehydropantoate 2-reductase</fullName>
        <ecNumber evidence="1">1.1.1.169</ecNumber>
    </recommendedName>
    <alternativeName>
        <fullName evidence="1">Ketopantoate reductase</fullName>
        <shortName evidence="1">KPR</shortName>
    </alternativeName>
</protein>
<feature type="chain" id="PRO_0000157316" description="2-dehydropantoate 2-reductase">
    <location>
        <begin position="1"/>
        <end position="295"/>
    </location>
</feature>
<feature type="active site" description="Proton donor" evidence="1">
    <location>
        <position position="177"/>
    </location>
</feature>
<feature type="binding site" evidence="3 5">
    <location>
        <begin position="10"/>
        <end position="13"/>
    </location>
    <ligand>
        <name>NADP(+)</name>
        <dbReference type="ChEBI" id="CHEBI:58349"/>
    </ligand>
</feature>
<feature type="binding site" evidence="3 5">
    <location>
        <begin position="33"/>
        <end position="34"/>
    </location>
    <ligand>
        <name>NADP(+)</name>
        <dbReference type="ChEBI" id="CHEBI:58349"/>
    </ligand>
</feature>
<feature type="binding site" evidence="3 5">
    <location>
        <position position="74"/>
    </location>
    <ligand>
        <name>NADP(+)</name>
        <dbReference type="ChEBI" id="CHEBI:58349"/>
    </ligand>
</feature>
<feature type="binding site" evidence="3 5">
    <location>
        <position position="84"/>
    </location>
    <ligand>
        <name>NADP(+)</name>
        <dbReference type="ChEBI" id="CHEBI:58349"/>
    </ligand>
</feature>
<feature type="binding site" evidence="3 5">
    <location>
        <position position="100"/>
    </location>
    <ligand>
        <name>NADP(+)</name>
        <dbReference type="ChEBI" id="CHEBI:58349"/>
    </ligand>
</feature>
<feature type="binding site" evidence="1">
    <location>
        <position position="100"/>
    </location>
    <ligand>
        <name>substrate</name>
    </ligand>
</feature>
<feature type="binding site" evidence="3 5">
    <location>
        <position position="126"/>
    </location>
    <ligand>
        <name>NADP(+)</name>
        <dbReference type="ChEBI" id="CHEBI:58349"/>
    </ligand>
</feature>
<feature type="binding site" evidence="1">
    <location>
        <position position="181"/>
    </location>
    <ligand>
        <name>substrate</name>
    </ligand>
</feature>
<feature type="binding site" evidence="1">
    <location>
        <position position="246"/>
    </location>
    <ligand>
        <name>substrate</name>
    </ligand>
</feature>
<feature type="binding site" evidence="3 5">
    <location>
        <begin position="255"/>
        <end position="258"/>
    </location>
    <ligand>
        <name>NADP(+)</name>
        <dbReference type="ChEBI" id="CHEBI:58349"/>
    </ligand>
</feature>
<feature type="strand" evidence="6">
    <location>
        <begin position="5"/>
        <end position="8"/>
    </location>
</feature>
<feature type="helix" evidence="6">
    <location>
        <begin position="12"/>
        <end position="24"/>
    </location>
</feature>
<feature type="strand" evidence="6">
    <location>
        <begin position="29"/>
        <end position="31"/>
    </location>
</feature>
<feature type="strand" evidence="6">
    <location>
        <begin position="37"/>
        <end position="43"/>
    </location>
</feature>
<feature type="strand" evidence="6">
    <location>
        <begin position="49"/>
        <end position="52"/>
    </location>
</feature>
<feature type="helix" evidence="6">
    <location>
        <begin position="59"/>
        <end position="61"/>
    </location>
</feature>
<feature type="strand" evidence="6">
    <location>
        <begin position="67"/>
        <end position="71"/>
    </location>
</feature>
<feature type="helix" evidence="6">
    <location>
        <begin position="75"/>
        <end position="77"/>
    </location>
</feature>
<feature type="helix" evidence="6">
    <location>
        <begin position="78"/>
        <end position="88"/>
    </location>
</feature>
<feature type="strand" evidence="6">
    <location>
        <begin position="94"/>
        <end position="98"/>
    </location>
</feature>
<feature type="strand" evidence="6">
    <location>
        <begin position="100"/>
        <end position="102"/>
    </location>
</feature>
<feature type="helix" evidence="6">
    <location>
        <begin position="104"/>
        <end position="108"/>
    </location>
</feature>
<feature type="helix" evidence="6">
    <location>
        <begin position="109"/>
        <end position="111"/>
    </location>
</feature>
<feature type="strand" evidence="6">
    <location>
        <begin position="115"/>
        <end position="123"/>
    </location>
</feature>
<feature type="strand" evidence="6">
    <location>
        <begin position="126"/>
        <end position="128"/>
    </location>
</feature>
<feature type="strand" evidence="6">
    <location>
        <begin position="134"/>
        <end position="136"/>
    </location>
</feature>
<feature type="strand" evidence="6">
    <location>
        <begin position="141"/>
        <end position="144"/>
    </location>
</feature>
<feature type="helix" evidence="6">
    <location>
        <begin position="148"/>
        <end position="159"/>
    </location>
</feature>
<feature type="strand" evidence="6">
    <location>
        <begin position="163"/>
        <end position="166"/>
    </location>
</feature>
<feature type="helix" evidence="6">
    <location>
        <begin position="170"/>
        <end position="190"/>
    </location>
</feature>
<feature type="helix" evidence="6">
    <location>
        <begin position="194"/>
        <end position="198"/>
    </location>
</feature>
<feature type="helix" evidence="6">
    <location>
        <begin position="200"/>
        <end position="219"/>
    </location>
</feature>
<feature type="helix" evidence="6">
    <location>
        <begin position="228"/>
        <end position="238"/>
    </location>
</feature>
<feature type="helix" evidence="6">
    <location>
        <begin position="246"/>
        <end position="252"/>
    </location>
</feature>
<feature type="helix" evidence="6">
    <location>
        <begin position="259"/>
        <end position="262"/>
    </location>
</feature>
<feature type="helix" evidence="6">
    <location>
        <begin position="264"/>
        <end position="270"/>
    </location>
</feature>
<feature type="helix" evidence="6">
    <location>
        <begin position="271"/>
        <end position="273"/>
    </location>
</feature>
<feature type="helix" evidence="6">
    <location>
        <begin position="278"/>
        <end position="292"/>
    </location>
</feature>
<organism>
    <name type="scientific">Mycobacterium tuberculosis (strain ATCC 25618 / H37Rv)</name>
    <dbReference type="NCBI Taxonomy" id="83332"/>
    <lineage>
        <taxon>Bacteria</taxon>
        <taxon>Bacillati</taxon>
        <taxon>Actinomycetota</taxon>
        <taxon>Actinomycetes</taxon>
        <taxon>Mycobacteriales</taxon>
        <taxon>Mycobacteriaceae</taxon>
        <taxon>Mycobacterium</taxon>
        <taxon>Mycobacterium tuberculosis complex</taxon>
    </lineage>
</organism>
<sequence length="295" mass="31033">MATGIALVGPGAVGTTVAALLHKAGYSPLLCGHTPRAGIELRRDGADPIVVPGPVHTSPREVAGPVDVLILAVKATQNDAARPWLTRLCDERTVVAVLQNGVEQVEQVQPHCPSSAVVPAIVWCSAETQPQGWVRLRGEAALVVPTGPAAEQFAGLLRGAGATVDCDPDFTTAAWRKLLVNALAGFMVLSGRRSAMFRRDDVAALSRRYVAECLAVARAEGARLDDDVVDEVVRLVRSAPQDMGTSMLADRAAHRPLEWDLRNGVIVRKARAHGLATPISDVLVPLLAAASDGPG</sequence>
<dbReference type="EC" id="1.1.1.169" evidence="1"/>
<dbReference type="EMBL" id="AL123456">
    <property type="protein sequence ID" value="CCP45369.1"/>
    <property type="status" value="ALT_INIT"/>
    <property type="molecule type" value="Genomic_DNA"/>
</dbReference>
<dbReference type="PIR" id="D70724">
    <property type="entry name" value="D70724"/>
</dbReference>
<dbReference type="RefSeq" id="NP_217089.3">
    <property type="nucleotide sequence ID" value="NC_000962.3"/>
</dbReference>
<dbReference type="RefSeq" id="WP_003413340.1">
    <property type="nucleotide sequence ID" value="NC_000962.3"/>
</dbReference>
<dbReference type="PDB" id="4OL9">
    <property type="method" value="X-ray"/>
    <property type="resolution" value="1.85 A"/>
    <property type="chains" value="A=2-295"/>
</dbReference>
<dbReference type="PDBsum" id="4OL9"/>
<dbReference type="SMR" id="P9WIL1"/>
<dbReference type="FunCoup" id="P9WIL1">
    <property type="interactions" value="138"/>
</dbReference>
<dbReference type="STRING" id="83332.Rv2573"/>
<dbReference type="PaxDb" id="83332-Rv2573"/>
<dbReference type="DNASU" id="888188"/>
<dbReference type="GeneID" id="888188"/>
<dbReference type="KEGG" id="mtu:Rv2573"/>
<dbReference type="PATRIC" id="fig|83332.12.peg.2881"/>
<dbReference type="TubercuList" id="Rv2573"/>
<dbReference type="eggNOG" id="COG1893">
    <property type="taxonomic scope" value="Bacteria"/>
</dbReference>
<dbReference type="InParanoid" id="P9WIL1"/>
<dbReference type="OrthoDB" id="8555723at2"/>
<dbReference type="UniPathway" id="UPA00028">
    <property type="reaction ID" value="UER00004"/>
</dbReference>
<dbReference type="EvolutionaryTrace" id="P9WIL1"/>
<dbReference type="Proteomes" id="UP000001584">
    <property type="component" value="Chromosome"/>
</dbReference>
<dbReference type="GO" id="GO:0005737">
    <property type="term" value="C:cytoplasm"/>
    <property type="evidence" value="ECO:0000318"/>
    <property type="project" value="GO_Central"/>
</dbReference>
<dbReference type="GO" id="GO:0005829">
    <property type="term" value="C:cytosol"/>
    <property type="evidence" value="ECO:0007005"/>
    <property type="project" value="MTBBASE"/>
</dbReference>
<dbReference type="GO" id="GO:0008677">
    <property type="term" value="F:2-dehydropantoate 2-reductase activity"/>
    <property type="evidence" value="ECO:0000318"/>
    <property type="project" value="GO_Central"/>
</dbReference>
<dbReference type="GO" id="GO:0050661">
    <property type="term" value="F:NADP binding"/>
    <property type="evidence" value="ECO:0000318"/>
    <property type="project" value="GO_Central"/>
</dbReference>
<dbReference type="GO" id="GO:0015940">
    <property type="term" value="P:pantothenate biosynthetic process"/>
    <property type="evidence" value="ECO:0007669"/>
    <property type="project" value="UniProtKB-UniPathway"/>
</dbReference>
<dbReference type="Gene3D" id="1.10.1040.10">
    <property type="entry name" value="N-(1-d-carboxylethyl)-l-norvaline Dehydrogenase, domain 2"/>
    <property type="match status" value="1"/>
</dbReference>
<dbReference type="Gene3D" id="3.40.50.720">
    <property type="entry name" value="NAD(P)-binding Rossmann-like Domain"/>
    <property type="match status" value="1"/>
</dbReference>
<dbReference type="InterPro" id="IPR008927">
    <property type="entry name" value="6-PGluconate_DH-like_C_sf"/>
</dbReference>
<dbReference type="InterPro" id="IPR013328">
    <property type="entry name" value="6PGD_dom2"/>
</dbReference>
<dbReference type="InterPro" id="IPR003710">
    <property type="entry name" value="ApbA"/>
</dbReference>
<dbReference type="InterPro" id="IPR050838">
    <property type="entry name" value="Ketopantoate_reductase"/>
</dbReference>
<dbReference type="InterPro" id="IPR013752">
    <property type="entry name" value="KPA_reductase"/>
</dbReference>
<dbReference type="InterPro" id="IPR013332">
    <property type="entry name" value="KPR_N"/>
</dbReference>
<dbReference type="InterPro" id="IPR036291">
    <property type="entry name" value="NAD(P)-bd_dom_sf"/>
</dbReference>
<dbReference type="NCBIfam" id="TIGR00745">
    <property type="entry name" value="apbA_panE"/>
    <property type="match status" value="1"/>
</dbReference>
<dbReference type="NCBIfam" id="NF005091">
    <property type="entry name" value="PRK06522.2-2"/>
    <property type="match status" value="1"/>
</dbReference>
<dbReference type="NCBIfam" id="NF009541">
    <property type="entry name" value="PRK12921.1-1"/>
    <property type="match status" value="1"/>
</dbReference>
<dbReference type="PANTHER" id="PTHR43765:SF2">
    <property type="entry name" value="2-DEHYDROPANTOATE 2-REDUCTASE"/>
    <property type="match status" value="1"/>
</dbReference>
<dbReference type="PANTHER" id="PTHR43765">
    <property type="entry name" value="2-DEHYDROPANTOATE 2-REDUCTASE-RELATED"/>
    <property type="match status" value="1"/>
</dbReference>
<dbReference type="Pfam" id="PF02558">
    <property type="entry name" value="ApbA"/>
    <property type="match status" value="1"/>
</dbReference>
<dbReference type="Pfam" id="PF08546">
    <property type="entry name" value="ApbA_C"/>
    <property type="match status" value="1"/>
</dbReference>
<dbReference type="SUPFAM" id="SSF48179">
    <property type="entry name" value="6-phosphogluconate dehydrogenase C-terminal domain-like"/>
    <property type="match status" value="1"/>
</dbReference>
<dbReference type="SUPFAM" id="SSF51735">
    <property type="entry name" value="NAD(P)-binding Rossmann-fold domains"/>
    <property type="match status" value="1"/>
</dbReference>
<proteinExistence type="evidence at protein level"/>